<proteinExistence type="inferred from homology"/>
<sequence length="336" mass="37172">MIEADRLISAGTTLPEDVADRAIRPKLLEEYVGQPQVRSQMEIFIKAAKLRGDALDHLLIFGPPGLGKTTLANIVANEMGVNLRTTSGPVLEKAGDLAAMLTNLEPHDVLFIDEIHRLSPVVEEVLYPAMEDYQLDIMIGEGPAARSIKIDLPPFTLIGATTRAGSLTSPLRDRFGIVQRLEFYQVPDLQYIVSRSARFMGLEMSDDGALEVARRARGTPRIANRLLRRVRDFAEVKHDGTISADIAAQALDMLNVDAEGFDYMDRKLLLAVIDKFFGGPVGLDNLAAAIGEERETIEDVLEPYLIQQGFLQRTPRGRMATVRAWNHFGITPPEMP</sequence>
<gene>
    <name evidence="1" type="primary">ruvB</name>
    <name type="ordered locus">EFER_1212</name>
</gene>
<dbReference type="EC" id="3.6.4.-" evidence="1"/>
<dbReference type="EMBL" id="CU928158">
    <property type="protein sequence ID" value="CAQ88737.1"/>
    <property type="molecule type" value="Genomic_DNA"/>
</dbReference>
<dbReference type="RefSeq" id="WP_000568522.1">
    <property type="nucleotide sequence ID" value="NC_011740.1"/>
</dbReference>
<dbReference type="SMR" id="B7LPI4"/>
<dbReference type="GeneID" id="86860002"/>
<dbReference type="KEGG" id="efe:EFER_1212"/>
<dbReference type="HOGENOM" id="CLU_055599_1_0_6"/>
<dbReference type="OrthoDB" id="9804478at2"/>
<dbReference type="Proteomes" id="UP000000745">
    <property type="component" value="Chromosome"/>
</dbReference>
<dbReference type="GO" id="GO:0005737">
    <property type="term" value="C:cytoplasm"/>
    <property type="evidence" value="ECO:0007669"/>
    <property type="project" value="UniProtKB-SubCell"/>
</dbReference>
<dbReference type="GO" id="GO:0048476">
    <property type="term" value="C:Holliday junction resolvase complex"/>
    <property type="evidence" value="ECO:0007669"/>
    <property type="project" value="UniProtKB-UniRule"/>
</dbReference>
<dbReference type="GO" id="GO:0005524">
    <property type="term" value="F:ATP binding"/>
    <property type="evidence" value="ECO:0007669"/>
    <property type="project" value="UniProtKB-UniRule"/>
</dbReference>
<dbReference type="GO" id="GO:0016887">
    <property type="term" value="F:ATP hydrolysis activity"/>
    <property type="evidence" value="ECO:0007669"/>
    <property type="project" value="InterPro"/>
</dbReference>
<dbReference type="GO" id="GO:0000400">
    <property type="term" value="F:four-way junction DNA binding"/>
    <property type="evidence" value="ECO:0007669"/>
    <property type="project" value="UniProtKB-UniRule"/>
</dbReference>
<dbReference type="GO" id="GO:0009378">
    <property type="term" value="F:four-way junction helicase activity"/>
    <property type="evidence" value="ECO:0007669"/>
    <property type="project" value="InterPro"/>
</dbReference>
<dbReference type="GO" id="GO:0006310">
    <property type="term" value="P:DNA recombination"/>
    <property type="evidence" value="ECO:0007669"/>
    <property type="project" value="UniProtKB-UniRule"/>
</dbReference>
<dbReference type="GO" id="GO:0006281">
    <property type="term" value="P:DNA repair"/>
    <property type="evidence" value="ECO:0007669"/>
    <property type="project" value="UniProtKB-UniRule"/>
</dbReference>
<dbReference type="GO" id="GO:0009432">
    <property type="term" value="P:SOS response"/>
    <property type="evidence" value="ECO:0007669"/>
    <property type="project" value="UniProtKB-UniRule"/>
</dbReference>
<dbReference type="CDD" id="cd00009">
    <property type="entry name" value="AAA"/>
    <property type="match status" value="1"/>
</dbReference>
<dbReference type="FunFam" id="1.10.10.10:FF:000086">
    <property type="entry name" value="Holliday junction ATP-dependent DNA helicase RuvB"/>
    <property type="match status" value="1"/>
</dbReference>
<dbReference type="FunFam" id="1.10.8.60:FF:000023">
    <property type="entry name" value="Holliday junction ATP-dependent DNA helicase RuvB"/>
    <property type="match status" value="1"/>
</dbReference>
<dbReference type="FunFam" id="3.40.50.300:FF:000073">
    <property type="entry name" value="Holliday junction ATP-dependent DNA helicase RuvB"/>
    <property type="match status" value="1"/>
</dbReference>
<dbReference type="Gene3D" id="1.10.8.60">
    <property type="match status" value="1"/>
</dbReference>
<dbReference type="Gene3D" id="3.40.50.300">
    <property type="entry name" value="P-loop containing nucleotide triphosphate hydrolases"/>
    <property type="match status" value="1"/>
</dbReference>
<dbReference type="Gene3D" id="1.10.10.10">
    <property type="entry name" value="Winged helix-like DNA-binding domain superfamily/Winged helix DNA-binding domain"/>
    <property type="match status" value="1"/>
</dbReference>
<dbReference type="HAMAP" id="MF_00016">
    <property type="entry name" value="DNA_HJ_migration_RuvB"/>
    <property type="match status" value="1"/>
</dbReference>
<dbReference type="InterPro" id="IPR003593">
    <property type="entry name" value="AAA+_ATPase"/>
</dbReference>
<dbReference type="InterPro" id="IPR041445">
    <property type="entry name" value="AAA_lid_4"/>
</dbReference>
<dbReference type="InterPro" id="IPR004605">
    <property type="entry name" value="DNA_helicase_Holl-junc_RuvB"/>
</dbReference>
<dbReference type="InterPro" id="IPR027417">
    <property type="entry name" value="P-loop_NTPase"/>
</dbReference>
<dbReference type="InterPro" id="IPR008824">
    <property type="entry name" value="RuvB-like_N"/>
</dbReference>
<dbReference type="InterPro" id="IPR008823">
    <property type="entry name" value="RuvB_C"/>
</dbReference>
<dbReference type="InterPro" id="IPR036388">
    <property type="entry name" value="WH-like_DNA-bd_sf"/>
</dbReference>
<dbReference type="InterPro" id="IPR036390">
    <property type="entry name" value="WH_DNA-bd_sf"/>
</dbReference>
<dbReference type="NCBIfam" id="NF000868">
    <property type="entry name" value="PRK00080.1"/>
    <property type="match status" value="1"/>
</dbReference>
<dbReference type="NCBIfam" id="TIGR00635">
    <property type="entry name" value="ruvB"/>
    <property type="match status" value="1"/>
</dbReference>
<dbReference type="PANTHER" id="PTHR42848">
    <property type="match status" value="1"/>
</dbReference>
<dbReference type="PANTHER" id="PTHR42848:SF1">
    <property type="entry name" value="HOLLIDAY JUNCTION BRANCH MIGRATION COMPLEX SUBUNIT RUVB"/>
    <property type="match status" value="1"/>
</dbReference>
<dbReference type="Pfam" id="PF17864">
    <property type="entry name" value="AAA_lid_4"/>
    <property type="match status" value="1"/>
</dbReference>
<dbReference type="Pfam" id="PF05491">
    <property type="entry name" value="RuvB_C"/>
    <property type="match status" value="1"/>
</dbReference>
<dbReference type="Pfam" id="PF05496">
    <property type="entry name" value="RuvB_N"/>
    <property type="match status" value="1"/>
</dbReference>
<dbReference type="SMART" id="SM00382">
    <property type="entry name" value="AAA"/>
    <property type="match status" value="1"/>
</dbReference>
<dbReference type="SUPFAM" id="SSF52540">
    <property type="entry name" value="P-loop containing nucleoside triphosphate hydrolases"/>
    <property type="match status" value="1"/>
</dbReference>
<dbReference type="SUPFAM" id="SSF46785">
    <property type="entry name" value="Winged helix' DNA-binding domain"/>
    <property type="match status" value="1"/>
</dbReference>
<keyword id="KW-0067">ATP-binding</keyword>
<keyword id="KW-0963">Cytoplasm</keyword>
<keyword id="KW-0227">DNA damage</keyword>
<keyword id="KW-0233">DNA recombination</keyword>
<keyword id="KW-0234">DNA repair</keyword>
<keyword id="KW-0238">DNA-binding</keyword>
<keyword id="KW-0378">Hydrolase</keyword>
<keyword id="KW-0547">Nucleotide-binding</keyword>
<keyword id="KW-0742">SOS response</keyword>
<accession>B7LPI4</accession>
<reference key="1">
    <citation type="journal article" date="2009" name="PLoS Genet.">
        <title>Organised genome dynamics in the Escherichia coli species results in highly diverse adaptive paths.</title>
        <authorList>
            <person name="Touchon M."/>
            <person name="Hoede C."/>
            <person name="Tenaillon O."/>
            <person name="Barbe V."/>
            <person name="Baeriswyl S."/>
            <person name="Bidet P."/>
            <person name="Bingen E."/>
            <person name="Bonacorsi S."/>
            <person name="Bouchier C."/>
            <person name="Bouvet O."/>
            <person name="Calteau A."/>
            <person name="Chiapello H."/>
            <person name="Clermont O."/>
            <person name="Cruveiller S."/>
            <person name="Danchin A."/>
            <person name="Diard M."/>
            <person name="Dossat C."/>
            <person name="Karoui M.E."/>
            <person name="Frapy E."/>
            <person name="Garry L."/>
            <person name="Ghigo J.M."/>
            <person name="Gilles A.M."/>
            <person name="Johnson J."/>
            <person name="Le Bouguenec C."/>
            <person name="Lescat M."/>
            <person name="Mangenot S."/>
            <person name="Martinez-Jehanne V."/>
            <person name="Matic I."/>
            <person name="Nassif X."/>
            <person name="Oztas S."/>
            <person name="Petit M.A."/>
            <person name="Pichon C."/>
            <person name="Rouy Z."/>
            <person name="Ruf C.S."/>
            <person name="Schneider D."/>
            <person name="Tourret J."/>
            <person name="Vacherie B."/>
            <person name="Vallenet D."/>
            <person name="Medigue C."/>
            <person name="Rocha E.P.C."/>
            <person name="Denamur E."/>
        </authorList>
    </citation>
    <scope>NUCLEOTIDE SEQUENCE [LARGE SCALE GENOMIC DNA]</scope>
    <source>
        <strain>ATCC 35469 / DSM 13698 / BCRC 15582 / CCUG 18766 / IAM 14443 / JCM 21226 / LMG 7866 / NBRC 102419 / NCTC 12128 / CDC 0568-73</strain>
    </source>
</reference>
<comment type="function">
    <text evidence="1">The RuvA-RuvB-RuvC complex processes Holliday junction (HJ) DNA during genetic recombination and DNA repair, while the RuvA-RuvB complex plays an important role in the rescue of blocked DNA replication forks via replication fork reversal (RFR). RuvA specifically binds to HJ cruciform DNA, conferring on it an open structure. The RuvB hexamer acts as an ATP-dependent pump, pulling dsDNA into and through the RuvAB complex. RuvB forms 2 homohexamers on either side of HJ DNA bound by 1 or 2 RuvA tetramers; 4 subunits per hexamer contact DNA at a time. Coordinated motions by a converter formed by DNA-disengaged RuvB subunits stimulates ATP hydrolysis and nucleotide exchange. Immobilization of the converter enables RuvB to convert the ATP-contained energy into a lever motion, pulling 2 nucleotides of DNA out of the RuvA tetramer per ATP hydrolyzed, thus driving DNA branch migration. The RuvB motors rotate together with the DNA substrate, which together with the progressing nucleotide cycle form the mechanistic basis for DNA recombination by continuous HJ branch migration. Branch migration allows RuvC to scan DNA until it finds its consensus sequence, where it cleaves and resolves cruciform DNA.</text>
</comment>
<comment type="catalytic activity">
    <reaction evidence="1">
        <text>ATP + H2O = ADP + phosphate + H(+)</text>
        <dbReference type="Rhea" id="RHEA:13065"/>
        <dbReference type="ChEBI" id="CHEBI:15377"/>
        <dbReference type="ChEBI" id="CHEBI:15378"/>
        <dbReference type="ChEBI" id="CHEBI:30616"/>
        <dbReference type="ChEBI" id="CHEBI:43474"/>
        <dbReference type="ChEBI" id="CHEBI:456216"/>
    </reaction>
</comment>
<comment type="subunit">
    <text evidence="1">Homohexamer. Forms an RuvA(8)-RuvB(12)-Holliday junction (HJ) complex. HJ DNA is sandwiched between 2 RuvA tetramers; dsDNA enters through RuvA and exits via RuvB. An RuvB hexamer assembles on each DNA strand where it exits the tetramer. Each RuvB hexamer is contacted by two RuvA subunits (via domain III) on 2 adjacent RuvB subunits; this complex drives branch migration. In the full resolvosome a probable DNA-RuvA(4)-RuvB(12)-RuvC(2) complex forms which resolves the HJ.</text>
</comment>
<comment type="subcellular location">
    <subcellularLocation>
        <location evidence="1">Cytoplasm</location>
    </subcellularLocation>
</comment>
<comment type="domain">
    <text evidence="1">Has 3 domains, the large (RuvB-L) and small ATPase (RuvB-S) domains and the C-terminal head (RuvB-H) domain. The head domain binds DNA, while the ATPase domains jointly bind ATP, ADP or are empty depending on the state of the subunit in the translocation cycle. During a single DNA translocation step the structure of each domain remains the same, but their relative positions change.</text>
</comment>
<comment type="similarity">
    <text evidence="1">Belongs to the RuvB family.</text>
</comment>
<name>RUVB_ESCF3</name>
<evidence type="ECO:0000255" key="1">
    <source>
        <dbReference type="HAMAP-Rule" id="MF_00016"/>
    </source>
</evidence>
<feature type="chain" id="PRO_1000195224" description="Holliday junction branch migration complex subunit RuvB">
    <location>
        <begin position="1"/>
        <end position="336"/>
    </location>
</feature>
<feature type="region of interest" description="Large ATPase domain (RuvB-L)" evidence="1">
    <location>
        <begin position="4"/>
        <end position="184"/>
    </location>
</feature>
<feature type="region of interest" description="Small ATPAse domain (RuvB-S)" evidence="1">
    <location>
        <begin position="185"/>
        <end position="255"/>
    </location>
</feature>
<feature type="region of interest" description="Head domain (RuvB-H)" evidence="1">
    <location>
        <begin position="258"/>
        <end position="336"/>
    </location>
</feature>
<feature type="binding site" evidence="1">
    <location>
        <position position="23"/>
    </location>
    <ligand>
        <name>ATP</name>
        <dbReference type="ChEBI" id="CHEBI:30616"/>
    </ligand>
</feature>
<feature type="binding site" evidence="1">
    <location>
        <position position="24"/>
    </location>
    <ligand>
        <name>ATP</name>
        <dbReference type="ChEBI" id="CHEBI:30616"/>
    </ligand>
</feature>
<feature type="binding site" evidence="1">
    <location>
        <position position="65"/>
    </location>
    <ligand>
        <name>ATP</name>
        <dbReference type="ChEBI" id="CHEBI:30616"/>
    </ligand>
</feature>
<feature type="binding site" evidence="1">
    <location>
        <position position="68"/>
    </location>
    <ligand>
        <name>ATP</name>
        <dbReference type="ChEBI" id="CHEBI:30616"/>
    </ligand>
</feature>
<feature type="binding site" evidence="1">
    <location>
        <position position="69"/>
    </location>
    <ligand>
        <name>ATP</name>
        <dbReference type="ChEBI" id="CHEBI:30616"/>
    </ligand>
</feature>
<feature type="binding site" evidence="1">
    <location>
        <position position="69"/>
    </location>
    <ligand>
        <name>Mg(2+)</name>
        <dbReference type="ChEBI" id="CHEBI:18420"/>
    </ligand>
</feature>
<feature type="binding site" evidence="1">
    <location>
        <position position="70"/>
    </location>
    <ligand>
        <name>ATP</name>
        <dbReference type="ChEBI" id="CHEBI:30616"/>
    </ligand>
</feature>
<feature type="binding site" evidence="1">
    <location>
        <begin position="131"/>
        <end position="133"/>
    </location>
    <ligand>
        <name>ATP</name>
        <dbReference type="ChEBI" id="CHEBI:30616"/>
    </ligand>
</feature>
<feature type="binding site" evidence="1">
    <location>
        <position position="174"/>
    </location>
    <ligand>
        <name>ATP</name>
        <dbReference type="ChEBI" id="CHEBI:30616"/>
    </ligand>
</feature>
<feature type="binding site" evidence="1">
    <location>
        <position position="184"/>
    </location>
    <ligand>
        <name>ATP</name>
        <dbReference type="ChEBI" id="CHEBI:30616"/>
    </ligand>
</feature>
<feature type="binding site" evidence="1">
    <location>
        <position position="221"/>
    </location>
    <ligand>
        <name>ATP</name>
        <dbReference type="ChEBI" id="CHEBI:30616"/>
    </ligand>
</feature>
<feature type="binding site" evidence="1">
    <location>
        <position position="294"/>
    </location>
    <ligand>
        <name>DNA</name>
        <dbReference type="ChEBI" id="CHEBI:16991"/>
    </ligand>
</feature>
<feature type="binding site" evidence="1">
    <location>
        <position position="313"/>
    </location>
    <ligand>
        <name>DNA</name>
        <dbReference type="ChEBI" id="CHEBI:16991"/>
    </ligand>
</feature>
<feature type="binding site" evidence="1">
    <location>
        <position position="318"/>
    </location>
    <ligand>
        <name>DNA</name>
        <dbReference type="ChEBI" id="CHEBI:16991"/>
    </ligand>
</feature>
<organism>
    <name type="scientific">Escherichia fergusonii (strain ATCC 35469 / DSM 13698 / CCUG 18766 / IAM 14443 / JCM 21226 / LMG 7866 / NBRC 102419 / NCTC 12128 / CDC 0568-73)</name>
    <dbReference type="NCBI Taxonomy" id="585054"/>
    <lineage>
        <taxon>Bacteria</taxon>
        <taxon>Pseudomonadati</taxon>
        <taxon>Pseudomonadota</taxon>
        <taxon>Gammaproteobacteria</taxon>
        <taxon>Enterobacterales</taxon>
        <taxon>Enterobacteriaceae</taxon>
        <taxon>Escherichia</taxon>
    </lineage>
</organism>
<protein>
    <recommendedName>
        <fullName evidence="1">Holliday junction branch migration complex subunit RuvB</fullName>
        <ecNumber evidence="1">3.6.4.-</ecNumber>
    </recommendedName>
</protein>